<proteinExistence type="inferred from homology"/>
<dbReference type="EMBL" id="CP000647">
    <property type="protein sequence ID" value="ABR75742.1"/>
    <property type="molecule type" value="Genomic_DNA"/>
</dbReference>
<dbReference type="RefSeq" id="WP_004144585.1">
    <property type="nucleotide sequence ID" value="NC_009648.1"/>
</dbReference>
<dbReference type="SMR" id="A6T571"/>
<dbReference type="STRING" id="272620.KPN_00290"/>
<dbReference type="PaxDb" id="272620-KPN_00290"/>
<dbReference type="EnsemblBacteria" id="ABR75742">
    <property type="protein sequence ID" value="ABR75742"/>
    <property type="gene ID" value="KPN_00290"/>
</dbReference>
<dbReference type="KEGG" id="kpn:KPN_00290"/>
<dbReference type="HOGENOM" id="CLU_128111_0_0_6"/>
<dbReference type="Proteomes" id="UP000000265">
    <property type="component" value="Chromosome"/>
</dbReference>
<dbReference type="GO" id="GO:0005737">
    <property type="term" value="C:cytoplasm"/>
    <property type="evidence" value="ECO:0007669"/>
    <property type="project" value="UniProtKB-SubCell"/>
</dbReference>
<dbReference type="GO" id="GO:0003677">
    <property type="term" value="F:DNA binding"/>
    <property type="evidence" value="ECO:0007669"/>
    <property type="project" value="UniProtKB-KW"/>
</dbReference>
<dbReference type="GO" id="GO:0006355">
    <property type="term" value="P:regulation of DNA-templated transcription"/>
    <property type="evidence" value="ECO:0007669"/>
    <property type="project" value="InterPro"/>
</dbReference>
<dbReference type="CDD" id="cd06170">
    <property type="entry name" value="LuxR_C_like"/>
    <property type="match status" value="1"/>
</dbReference>
<dbReference type="Gene3D" id="1.10.10.10">
    <property type="entry name" value="Winged helix-like DNA-binding domain superfamily/Winged helix DNA-binding domain"/>
    <property type="match status" value="1"/>
</dbReference>
<dbReference type="InterPro" id="IPR016032">
    <property type="entry name" value="Sig_transdc_resp-reg_C-effctor"/>
</dbReference>
<dbReference type="InterPro" id="IPR000792">
    <property type="entry name" value="Tscrpt_reg_LuxR_C"/>
</dbReference>
<dbReference type="InterPro" id="IPR036388">
    <property type="entry name" value="WH-like_DNA-bd_sf"/>
</dbReference>
<dbReference type="Pfam" id="PF00196">
    <property type="entry name" value="GerE"/>
    <property type="match status" value="1"/>
</dbReference>
<dbReference type="PRINTS" id="PR00038">
    <property type="entry name" value="HTHLUXR"/>
</dbReference>
<dbReference type="SMART" id="SM00421">
    <property type="entry name" value="HTH_LUXR"/>
    <property type="match status" value="1"/>
</dbReference>
<dbReference type="SUPFAM" id="SSF46894">
    <property type="entry name" value="C-terminal effector domain of the bipartite response regulators"/>
    <property type="match status" value="1"/>
</dbReference>
<dbReference type="PROSITE" id="PS50043">
    <property type="entry name" value="HTH_LUXR_2"/>
    <property type="match status" value="1"/>
</dbReference>
<accession>A6T571</accession>
<gene>
    <name type="primary">ecpR</name>
    <name type="synonym">matA</name>
    <name type="ordered locus">KPN78578_02810</name>
    <name type="ORF">KPN_00290</name>
</gene>
<organism>
    <name type="scientific">Klebsiella pneumoniae subsp. pneumoniae (strain ATCC 700721 / MGH 78578)</name>
    <dbReference type="NCBI Taxonomy" id="272620"/>
    <lineage>
        <taxon>Bacteria</taxon>
        <taxon>Pseudomonadati</taxon>
        <taxon>Pseudomonadota</taxon>
        <taxon>Gammaproteobacteria</taxon>
        <taxon>Enterobacterales</taxon>
        <taxon>Enterobacteriaceae</taxon>
        <taxon>Klebsiella/Raoultella group</taxon>
        <taxon>Klebsiella</taxon>
        <taxon>Klebsiella pneumoniae complex</taxon>
    </lineage>
</organism>
<keyword id="KW-0010">Activator</keyword>
<keyword id="KW-0963">Cytoplasm</keyword>
<keyword id="KW-0238">DNA-binding</keyword>
<keyword id="KW-0804">Transcription</keyword>
<keyword id="KW-0805">Transcription regulation</keyword>
<comment type="function">
    <text evidence="1">Part of the ecpRABCDE operon, which encodes the E.coli common pilus (ECP). ECP plays a dual role in early-stage biofilm development and host cell recognition. Positively regulates the expression of the ecp operon (By similarity).</text>
</comment>
<comment type="subcellular location">
    <subcellularLocation>
        <location evidence="3">Cytoplasm</location>
    </subcellularLocation>
</comment>
<comment type="similarity">
    <text evidence="3">Belongs to the EcpR/MatA family.</text>
</comment>
<sequence>MEYKSCSDKYIWSADDSYFYKGLSELIVDIDELIYLSLEKIRKDFVFINLNTASLNEFIRRDSEWLSAVKGKQVVLIAARKSEALANYWYYNSDIRGVVYVGLSRDIRKELAYVINGRFLRKDIKKDKITDREMKIIRMTAQGMQPKSIARIENCSVKTVYTHRRNAEAKLYSKIYKLVQ</sequence>
<name>ECPR_KLEP7</name>
<protein>
    <recommendedName>
        <fullName>HTH-type transcriptional regulator EcpR</fullName>
    </recommendedName>
</protein>
<evidence type="ECO:0000250" key="1"/>
<evidence type="ECO:0000255" key="2">
    <source>
        <dbReference type="PROSITE-ProRule" id="PRU00411"/>
    </source>
</evidence>
<evidence type="ECO:0000305" key="3"/>
<feature type="chain" id="PRO_0000369188" description="HTH-type transcriptional regulator EcpR">
    <location>
        <begin position="1"/>
        <end position="180"/>
    </location>
</feature>
<feature type="domain" description="HTH luxR-type" evidence="2">
    <location>
        <begin position="122"/>
        <end position="180"/>
    </location>
</feature>
<feature type="DNA-binding region" description="H-T-H motif" evidence="2">
    <location>
        <begin position="146"/>
        <end position="165"/>
    </location>
</feature>
<reference key="1">
    <citation type="submission" date="2006-09" db="EMBL/GenBank/DDBJ databases">
        <authorList>
            <consortium name="The Klebsiella pneumonia Genome Sequencing Project"/>
            <person name="McClelland M."/>
            <person name="Sanderson E.K."/>
            <person name="Spieth J."/>
            <person name="Clifton W.S."/>
            <person name="Latreille P."/>
            <person name="Sabo A."/>
            <person name="Pepin K."/>
            <person name="Bhonagiri V."/>
            <person name="Porwollik S."/>
            <person name="Ali J."/>
            <person name="Wilson R.K."/>
        </authorList>
    </citation>
    <scope>NUCLEOTIDE SEQUENCE [LARGE SCALE GENOMIC DNA]</scope>
    <source>
        <strain>ATCC 700721 / MGH 78578</strain>
    </source>
</reference>